<reference key="1">
    <citation type="submission" date="2008-04" db="EMBL/GenBank/DDBJ databases">
        <title>Complete sequence of Yersinia pseudotuberculosis PB1/+.</title>
        <authorList>
            <person name="Copeland A."/>
            <person name="Lucas S."/>
            <person name="Lapidus A."/>
            <person name="Glavina del Rio T."/>
            <person name="Dalin E."/>
            <person name="Tice H."/>
            <person name="Bruce D."/>
            <person name="Goodwin L."/>
            <person name="Pitluck S."/>
            <person name="Munk A.C."/>
            <person name="Brettin T."/>
            <person name="Detter J.C."/>
            <person name="Han C."/>
            <person name="Tapia R."/>
            <person name="Schmutz J."/>
            <person name="Larimer F."/>
            <person name="Land M."/>
            <person name="Hauser L."/>
            <person name="Challacombe J.F."/>
            <person name="Green L."/>
            <person name="Lindler L.E."/>
            <person name="Nikolich M.P."/>
            <person name="Richardson P."/>
        </authorList>
    </citation>
    <scope>NUCLEOTIDE SEQUENCE [LARGE SCALE GENOMIC DNA]</scope>
    <source>
        <strain>PB1/+</strain>
    </source>
</reference>
<proteinExistence type="inferred from homology"/>
<dbReference type="EC" id="2.3.1.181" evidence="1"/>
<dbReference type="EMBL" id="CP001048">
    <property type="protein sequence ID" value="ACC88125.1"/>
    <property type="molecule type" value="Genomic_DNA"/>
</dbReference>
<dbReference type="RefSeq" id="WP_002218201.1">
    <property type="nucleotide sequence ID" value="NZ_CP009780.1"/>
</dbReference>
<dbReference type="SMR" id="B2K875"/>
<dbReference type="GeneID" id="57976096"/>
<dbReference type="KEGG" id="ypb:YPTS_1149"/>
<dbReference type="UniPathway" id="UPA00538">
    <property type="reaction ID" value="UER00592"/>
</dbReference>
<dbReference type="GO" id="GO:0005737">
    <property type="term" value="C:cytoplasm"/>
    <property type="evidence" value="ECO:0007669"/>
    <property type="project" value="UniProtKB-SubCell"/>
</dbReference>
<dbReference type="GO" id="GO:0033819">
    <property type="term" value="F:lipoyl(octanoyl) transferase activity"/>
    <property type="evidence" value="ECO:0007669"/>
    <property type="project" value="UniProtKB-EC"/>
</dbReference>
<dbReference type="GO" id="GO:0036211">
    <property type="term" value="P:protein modification process"/>
    <property type="evidence" value="ECO:0007669"/>
    <property type="project" value="InterPro"/>
</dbReference>
<dbReference type="CDD" id="cd16444">
    <property type="entry name" value="LipB"/>
    <property type="match status" value="1"/>
</dbReference>
<dbReference type="FunFam" id="3.30.930.10:FF:000020">
    <property type="entry name" value="Octanoyltransferase"/>
    <property type="match status" value="1"/>
</dbReference>
<dbReference type="Gene3D" id="3.30.930.10">
    <property type="entry name" value="Bira Bifunctional Protein, Domain 2"/>
    <property type="match status" value="1"/>
</dbReference>
<dbReference type="HAMAP" id="MF_00013">
    <property type="entry name" value="LipB"/>
    <property type="match status" value="1"/>
</dbReference>
<dbReference type="InterPro" id="IPR045864">
    <property type="entry name" value="aa-tRNA-synth_II/BPL/LPL"/>
</dbReference>
<dbReference type="InterPro" id="IPR004143">
    <property type="entry name" value="BPL_LPL_catalytic"/>
</dbReference>
<dbReference type="InterPro" id="IPR000544">
    <property type="entry name" value="Octanoyltransferase"/>
</dbReference>
<dbReference type="InterPro" id="IPR020605">
    <property type="entry name" value="Octanoyltransferase_CS"/>
</dbReference>
<dbReference type="NCBIfam" id="TIGR00214">
    <property type="entry name" value="lipB"/>
    <property type="match status" value="1"/>
</dbReference>
<dbReference type="NCBIfam" id="NF010922">
    <property type="entry name" value="PRK14342.1"/>
    <property type="match status" value="1"/>
</dbReference>
<dbReference type="PANTHER" id="PTHR10993:SF7">
    <property type="entry name" value="LIPOYLTRANSFERASE 2, MITOCHONDRIAL-RELATED"/>
    <property type="match status" value="1"/>
</dbReference>
<dbReference type="PANTHER" id="PTHR10993">
    <property type="entry name" value="OCTANOYLTRANSFERASE"/>
    <property type="match status" value="1"/>
</dbReference>
<dbReference type="Pfam" id="PF21948">
    <property type="entry name" value="LplA-B_cat"/>
    <property type="match status" value="1"/>
</dbReference>
<dbReference type="PIRSF" id="PIRSF016262">
    <property type="entry name" value="LPLase"/>
    <property type="match status" value="1"/>
</dbReference>
<dbReference type="SUPFAM" id="SSF55681">
    <property type="entry name" value="Class II aaRS and biotin synthetases"/>
    <property type="match status" value="1"/>
</dbReference>
<dbReference type="PROSITE" id="PS51733">
    <property type="entry name" value="BPL_LPL_CATALYTIC"/>
    <property type="match status" value="1"/>
</dbReference>
<dbReference type="PROSITE" id="PS01313">
    <property type="entry name" value="LIPB"/>
    <property type="match status" value="1"/>
</dbReference>
<protein>
    <recommendedName>
        <fullName evidence="1">Octanoyltransferase</fullName>
        <ecNumber evidence="1">2.3.1.181</ecNumber>
    </recommendedName>
    <alternativeName>
        <fullName evidence="1">Lipoate-protein ligase B</fullName>
    </alternativeName>
    <alternativeName>
        <fullName evidence="1">Lipoyl/octanoyl transferase</fullName>
    </alternativeName>
    <alternativeName>
        <fullName evidence="1">Octanoyl-[acyl-carrier-protein]-protein N-octanoyltransferase</fullName>
    </alternativeName>
</protein>
<name>LIPB_YERPB</name>
<keyword id="KW-0012">Acyltransferase</keyword>
<keyword id="KW-0963">Cytoplasm</keyword>
<keyword id="KW-0808">Transferase</keyword>
<evidence type="ECO:0000255" key="1">
    <source>
        <dbReference type="HAMAP-Rule" id="MF_00013"/>
    </source>
</evidence>
<evidence type="ECO:0000255" key="2">
    <source>
        <dbReference type="PROSITE-ProRule" id="PRU01067"/>
    </source>
</evidence>
<comment type="function">
    <text evidence="1">Catalyzes the transfer of endogenously produced octanoic acid from octanoyl-acyl-carrier-protein onto the lipoyl domains of lipoate-dependent enzymes. Lipoyl-ACP can also act as a substrate although octanoyl-ACP is likely to be the physiological substrate.</text>
</comment>
<comment type="catalytic activity">
    <reaction evidence="1">
        <text>octanoyl-[ACP] + L-lysyl-[protein] = N(6)-octanoyl-L-lysyl-[protein] + holo-[ACP] + H(+)</text>
        <dbReference type="Rhea" id="RHEA:17665"/>
        <dbReference type="Rhea" id="RHEA-COMP:9636"/>
        <dbReference type="Rhea" id="RHEA-COMP:9685"/>
        <dbReference type="Rhea" id="RHEA-COMP:9752"/>
        <dbReference type="Rhea" id="RHEA-COMP:9928"/>
        <dbReference type="ChEBI" id="CHEBI:15378"/>
        <dbReference type="ChEBI" id="CHEBI:29969"/>
        <dbReference type="ChEBI" id="CHEBI:64479"/>
        <dbReference type="ChEBI" id="CHEBI:78463"/>
        <dbReference type="ChEBI" id="CHEBI:78809"/>
        <dbReference type="EC" id="2.3.1.181"/>
    </reaction>
</comment>
<comment type="pathway">
    <text evidence="1">Protein modification; protein lipoylation via endogenous pathway; protein N(6)-(lipoyl)lysine from octanoyl-[acyl-carrier-protein]: step 1/2.</text>
</comment>
<comment type="subcellular location">
    <subcellularLocation>
        <location evidence="1">Cytoplasm</location>
    </subcellularLocation>
</comment>
<comment type="miscellaneous">
    <text evidence="1">In the reaction, the free carboxyl group of octanoic acid is attached via an amide linkage to the epsilon-amino group of a specific lysine residue of lipoyl domains of lipoate-dependent enzymes.</text>
</comment>
<comment type="similarity">
    <text evidence="1">Belongs to the LipB family.</text>
</comment>
<gene>
    <name evidence="1" type="primary">lipB</name>
    <name type="ordered locus">YPTS_1149</name>
</gene>
<sequence length="233" mass="25995">MMPRLQQHKIILRQLGLQPYAPVSQAMHNFTEFRTDTTPDEIWLVEHQHVFTQGQAGKAEHVLMPGDIPVIQSDRGGQVTYHGPGQQVMYVMVDLKRAKIGVRQLVTAIENTVIETLAHFNIDSHARPDAPGVYVEQQKICSLGLRIRRGCSFHGLALNIAMDLEPFQRINPCGYAGMQMTQVSALQPGVTVADVQPVLVREFTRQLGYPTAKLQPWSLSDYLLSSHSSSSVL</sequence>
<feature type="chain" id="PRO_1000089483" description="Octanoyltransferase">
    <location>
        <begin position="1"/>
        <end position="233"/>
    </location>
</feature>
<feature type="domain" description="BPL/LPL catalytic" evidence="2">
    <location>
        <begin position="36"/>
        <end position="211"/>
    </location>
</feature>
<feature type="active site" description="Acyl-thioester intermediate" evidence="1">
    <location>
        <position position="173"/>
    </location>
</feature>
<feature type="binding site" evidence="1">
    <location>
        <begin position="75"/>
        <end position="82"/>
    </location>
    <ligand>
        <name>substrate</name>
    </ligand>
</feature>
<feature type="binding site" evidence="1">
    <location>
        <begin position="142"/>
        <end position="144"/>
    </location>
    <ligand>
        <name>substrate</name>
    </ligand>
</feature>
<feature type="binding site" evidence="1">
    <location>
        <begin position="155"/>
        <end position="157"/>
    </location>
    <ligand>
        <name>substrate</name>
    </ligand>
</feature>
<feature type="site" description="Lowers pKa of active site Cys" evidence="1">
    <location>
        <position position="139"/>
    </location>
</feature>
<organism>
    <name type="scientific">Yersinia pseudotuberculosis serotype IB (strain PB1/+)</name>
    <dbReference type="NCBI Taxonomy" id="502801"/>
    <lineage>
        <taxon>Bacteria</taxon>
        <taxon>Pseudomonadati</taxon>
        <taxon>Pseudomonadota</taxon>
        <taxon>Gammaproteobacteria</taxon>
        <taxon>Enterobacterales</taxon>
        <taxon>Yersiniaceae</taxon>
        <taxon>Yersinia</taxon>
    </lineage>
</organism>
<accession>B2K875</accession>